<dbReference type="EMBL" id="AE008918">
    <property type="protein sequence ID" value="AAL53933.1"/>
    <property type="molecule type" value="Genomic_DNA"/>
</dbReference>
<dbReference type="PIR" id="AB3596">
    <property type="entry name" value="AB3596"/>
</dbReference>
<dbReference type="SMR" id="Q8YC41"/>
<dbReference type="KEGG" id="bme:BMEII0691"/>
<dbReference type="eggNOG" id="COG4166">
    <property type="taxonomic scope" value="Bacteria"/>
</dbReference>
<dbReference type="Proteomes" id="UP000000419">
    <property type="component" value="Chromosome II"/>
</dbReference>
<dbReference type="GO" id="GO:0043190">
    <property type="term" value="C:ATP-binding cassette (ABC) transporter complex"/>
    <property type="evidence" value="ECO:0007669"/>
    <property type="project" value="InterPro"/>
</dbReference>
<dbReference type="GO" id="GO:0030288">
    <property type="term" value="C:outer membrane-bounded periplasmic space"/>
    <property type="evidence" value="ECO:0007669"/>
    <property type="project" value="TreeGrafter"/>
</dbReference>
<dbReference type="GO" id="GO:1904680">
    <property type="term" value="F:peptide transmembrane transporter activity"/>
    <property type="evidence" value="ECO:0007669"/>
    <property type="project" value="TreeGrafter"/>
</dbReference>
<dbReference type="GO" id="GO:0042884">
    <property type="term" value="P:microcin transport"/>
    <property type="evidence" value="ECO:0007669"/>
    <property type="project" value="TreeGrafter"/>
</dbReference>
<dbReference type="GO" id="GO:0015833">
    <property type="term" value="P:peptide transport"/>
    <property type="evidence" value="ECO:0007669"/>
    <property type="project" value="TreeGrafter"/>
</dbReference>
<dbReference type="CDD" id="cd08497">
    <property type="entry name" value="MbnE-like"/>
    <property type="match status" value="1"/>
</dbReference>
<dbReference type="Gene3D" id="3.10.105.10">
    <property type="entry name" value="Dipeptide-binding Protein, Domain 3"/>
    <property type="match status" value="1"/>
</dbReference>
<dbReference type="Gene3D" id="3.40.190.10">
    <property type="entry name" value="Periplasmic binding protein-like II"/>
    <property type="match status" value="1"/>
</dbReference>
<dbReference type="InterPro" id="IPR030678">
    <property type="entry name" value="Peptide/Ni-bd"/>
</dbReference>
<dbReference type="InterPro" id="IPR039424">
    <property type="entry name" value="SBP_5"/>
</dbReference>
<dbReference type="InterPro" id="IPR000914">
    <property type="entry name" value="SBP_5_dom"/>
</dbReference>
<dbReference type="PANTHER" id="PTHR30290:SF64">
    <property type="entry name" value="ABC TRANSPORTER PERIPLASMIC BINDING PROTEIN"/>
    <property type="match status" value="1"/>
</dbReference>
<dbReference type="PANTHER" id="PTHR30290">
    <property type="entry name" value="PERIPLASMIC BINDING COMPONENT OF ABC TRANSPORTER"/>
    <property type="match status" value="1"/>
</dbReference>
<dbReference type="Pfam" id="PF00496">
    <property type="entry name" value="SBP_bac_5"/>
    <property type="match status" value="1"/>
</dbReference>
<dbReference type="PIRSF" id="PIRSF002741">
    <property type="entry name" value="MppA"/>
    <property type="match status" value="1"/>
</dbReference>
<dbReference type="SUPFAM" id="SSF53850">
    <property type="entry name" value="Periplasmic binding protein-like II"/>
    <property type="match status" value="1"/>
</dbReference>
<keyword id="KW-0574">Periplasm</keyword>
<keyword id="KW-0732">Signal</keyword>
<keyword id="KW-0813">Transport</keyword>
<evidence type="ECO:0000255" key="1"/>
<evidence type="ECO:0000305" key="2"/>
<reference key="1">
    <citation type="journal article" date="2002" name="Proc. Natl. Acad. Sci. U.S.A.">
        <title>The genome sequence of the facultative intracellular pathogen Brucella melitensis.</title>
        <authorList>
            <person name="DelVecchio V.G."/>
            <person name="Kapatral V."/>
            <person name="Redkar R.J."/>
            <person name="Patra G."/>
            <person name="Mujer C."/>
            <person name="Los T."/>
            <person name="Ivanova N."/>
            <person name="Anderson I."/>
            <person name="Bhattacharyya A."/>
            <person name="Lykidis A."/>
            <person name="Reznik G."/>
            <person name="Jablonski L."/>
            <person name="Larsen N."/>
            <person name="D'Souza M."/>
            <person name="Bernal A."/>
            <person name="Mazur M."/>
            <person name="Goltsman E."/>
            <person name="Selkov E."/>
            <person name="Elzer P.H."/>
            <person name="Hagius S."/>
            <person name="O'Callaghan D."/>
            <person name="Letesson J.-J."/>
            <person name="Haselkorn R."/>
            <person name="Kyrpides N.C."/>
            <person name="Overbeek R."/>
        </authorList>
    </citation>
    <scope>NUCLEOTIDE SEQUENCE [LARGE SCALE GENOMIC DNA]</scope>
    <source>
        <strain>ATCC 23456 / CCUG 17765 / NCTC 10094 / 16M</strain>
    </source>
</reference>
<organism>
    <name type="scientific">Brucella melitensis biotype 1 (strain ATCC 23456 / CCUG 17765 / NCTC 10094 / 16M)</name>
    <dbReference type="NCBI Taxonomy" id="224914"/>
    <lineage>
        <taxon>Bacteria</taxon>
        <taxon>Pseudomonadati</taxon>
        <taxon>Pseudomonadota</taxon>
        <taxon>Alphaproteobacteria</taxon>
        <taxon>Hyphomicrobiales</taxon>
        <taxon>Brucellaceae</taxon>
        <taxon>Brucella/Ochrobactrum group</taxon>
        <taxon>Brucella</taxon>
    </lineage>
</organism>
<proteinExistence type="inferred from homology"/>
<name>Y3691_BRUME</name>
<accession>Q8YC41</accession>
<comment type="subcellular location">
    <subcellularLocation>
        <location evidence="2">Periplasm</location>
    </subcellularLocation>
</comment>
<comment type="similarity">
    <text evidence="2">Belongs to the bacterial solute-binding protein 5 family.</text>
</comment>
<protein>
    <recommendedName>
        <fullName>Putative binding protein BMEII0691</fullName>
    </recommendedName>
</protein>
<sequence>MNRFIAFFRSVFLIGLVATAFGALPARAANETAPDYALSMHGDVALPADYTHFPYTNPDAPKKGSLTVGVVGTFDSLNPFVLKSMRTTARGLYNDGEFGNMVYQTLMLRSRDEPFTLYSLLAEKVAIDPERKWVEFTLNPKAKWSDGQPVTVDDVLFTYDILTEKGRPPYNSRMSRVAKIEKTGERSVRFTFNEKSDREFPMLIAGSMPVLPKHAINRDTFGNSTLEPPIGSGPYVVASVQPGQRIVYKRNPDYWGKDLPSQRGFNNFDKISIEYYRNETSLFESFKKGILDIFIEGNPIRWEKLYDFPAVEQGKVIKDTFEKGTPADMLGFVFNTRRPIFADRRVRQALGLLFDFEWANSNLFAGQYRRTQSFWEGSQLSSVGRPADARERELLAPFPGAVREDVMNGTWHPPVTDGSGHDRVPAKKAYDLLSQAGFQFKDGMAIDPTGKPFAFEIMTRSPDEEKIALAYQRNLSRLGIAVEIHTVDDAQYQQRLQTFDYDMILGALASSLSPGNEQWLRWGSASRDVQGSFNFAGVADPAVDAMIEALLAARNRADFVSAVRALDRVLISGDYYVPLYHLPYQWVARWDRIEHPQKTPLSGYQLPAWWHTSQ</sequence>
<feature type="signal peptide" evidence="1">
    <location>
        <begin position="1"/>
        <end position="28"/>
    </location>
</feature>
<feature type="chain" id="PRO_0000283786" description="Putative binding protein BMEII0691">
    <location>
        <begin position="29"/>
        <end position="614"/>
    </location>
</feature>
<gene>
    <name type="ordered locus">BMEII0691</name>
</gene>